<gene>
    <name evidence="1" type="primary">clpP</name>
    <name type="ordered locus">Rpal_3309</name>
</gene>
<protein>
    <recommendedName>
        <fullName evidence="1">ATP-dependent Clp protease proteolytic subunit</fullName>
        <ecNumber evidence="1">3.4.21.92</ecNumber>
    </recommendedName>
    <alternativeName>
        <fullName evidence="1">Endopeptidase Clp</fullName>
    </alternativeName>
</protein>
<dbReference type="EC" id="3.4.21.92" evidence="1"/>
<dbReference type="EMBL" id="CP001096">
    <property type="protein sequence ID" value="ACF01811.1"/>
    <property type="molecule type" value="Genomic_DNA"/>
</dbReference>
<dbReference type="RefSeq" id="WP_011158510.1">
    <property type="nucleotide sequence ID" value="NC_011004.1"/>
</dbReference>
<dbReference type="SMR" id="B3Q7P5"/>
<dbReference type="MEROPS" id="S14.001"/>
<dbReference type="KEGG" id="rpt:Rpal_3309"/>
<dbReference type="HOGENOM" id="CLU_058707_3_2_5"/>
<dbReference type="OrthoDB" id="9802800at2"/>
<dbReference type="Proteomes" id="UP000001725">
    <property type="component" value="Chromosome"/>
</dbReference>
<dbReference type="GO" id="GO:0005737">
    <property type="term" value="C:cytoplasm"/>
    <property type="evidence" value="ECO:0007669"/>
    <property type="project" value="UniProtKB-SubCell"/>
</dbReference>
<dbReference type="GO" id="GO:0009368">
    <property type="term" value="C:endopeptidase Clp complex"/>
    <property type="evidence" value="ECO:0007669"/>
    <property type="project" value="TreeGrafter"/>
</dbReference>
<dbReference type="GO" id="GO:0004176">
    <property type="term" value="F:ATP-dependent peptidase activity"/>
    <property type="evidence" value="ECO:0007669"/>
    <property type="project" value="InterPro"/>
</dbReference>
<dbReference type="GO" id="GO:0051117">
    <property type="term" value="F:ATPase binding"/>
    <property type="evidence" value="ECO:0007669"/>
    <property type="project" value="TreeGrafter"/>
</dbReference>
<dbReference type="GO" id="GO:0004252">
    <property type="term" value="F:serine-type endopeptidase activity"/>
    <property type="evidence" value="ECO:0007669"/>
    <property type="project" value="UniProtKB-UniRule"/>
</dbReference>
<dbReference type="GO" id="GO:0006515">
    <property type="term" value="P:protein quality control for misfolded or incompletely synthesized proteins"/>
    <property type="evidence" value="ECO:0007669"/>
    <property type="project" value="TreeGrafter"/>
</dbReference>
<dbReference type="CDD" id="cd07017">
    <property type="entry name" value="S14_ClpP_2"/>
    <property type="match status" value="1"/>
</dbReference>
<dbReference type="FunFam" id="3.90.226.10:FF:000001">
    <property type="entry name" value="ATP-dependent Clp protease proteolytic subunit"/>
    <property type="match status" value="1"/>
</dbReference>
<dbReference type="Gene3D" id="3.90.226.10">
    <property type="entry name" value="2-enoyl-CoA Hydratase, Chain A, domain 1"/>
    <property type="match status" value="1"/>
</dbReference>
<dbReference type="HAMAP" id="MF_00444">
    <property type="entry name" value="ClpP"/>
    <property type="match status" value="1"/>
</dbReference>
<dbReference type="InterPro" id="IPR001907">
    <property type="entry name" value="ClpP"/>
</dbReference>
<dbReference type="InterPro" id="IPR029045">
    <property type="entry name" value="ClpP/crotonase-like_dom_sf"/>
</dbReference>
<dbReference type="InterPro" id="IPR023562">
    <property type="entry name" value="ClpP/TepA"/>
</dbReference>
<dbReference type="InterPro" id="IPR033135">
    <property type="entry name" value="ClpP_His_AS"/>
</dbReference>
<dbReference type="NCBIfam" id="NF001368">
    <property type="entry name" value="PRK00277.1"/>
    <property type="match status" value="1"/>
</dbReference>
<dbReference type="NCBIfam" id="NF009205">
    <property type="entry name" value="PRK12553.1"/>
    <property type="match status" value="1"/>
</dbReference>
<dbReference type="PANTHER" id="PTHR10381">
    <property type="entry name" value="ATP-DEPENDENT CLP PROTEASE PROTEOLYTIC SUBUNIT"/>
    <property type="match status" value="1"/>
</dbReference>
<dbReference type="PANTHER" id="PTHR10381:SF70">
    <property type="entry name" value="ATP-DEPENDENT CLP PROTEASE PROTEOLYTIC SUBUNIT"/>
    <property type="match status" value="1"/>
</dbReference>
<dbReference type="Pfam" id="PF00574">
    <property type="entry name" value="CLP_protease"/>
    <property type="match status" value="1"/>
</dbReference>
<dbReference type="PRINTS" id="PR00127">
    <property type="entry name" value="CLPPROTEASEP"/>
</dbReference>
<dbReference type="SUPFAM" id="SSF52096">
    <property type="entry name" value="ClpP/crotonase"/>
    <property type="match status" value="1"/>
</dbReference>
<dbReference type="PROSITE" id="PS00382">
    <property type="entry name" value="CLP_PROTEASE_HIS"/>
    <property type="match status" value="1"/>
</dbReference>
<feature type="chain" id="PRO_1000189661" description="ATP-dependent Clp protease proteolytic subunit">
    <location>
        <begin position="1"/>
        <end position="212"/>
    </location>
</feature>
<feature type="active site" description="Nucleophile" evidence="1">
    <location>
        <position position="106"/>
    </location>
</feature>
<feature type="active site" evidence="1">
    <location>
        <position position="131"/>
    </location>
</feature>
<accession>B3Q7P5</accession>
<name>CLPP_RHOPT</name>
<keyword id="KW-0963">Cytoplasm</keyword>
<keyword id="KW-0378">Hydrolase</keyword>
<keyword id="KW-0645">Protease</keyword>
<keyword id="KW-0720">Serine protease</keyword>
<organism>
    <name type="scientific">Rhodopseudomonas palustris (strain TIE-1)</name>
    <dbReference type="NCBI Taxonomy" id="395960"/>
    <lineage>
        <taxon>Bacteria</taxon>
        <taxon>Pseudomonadati</taxon>
        <taxon>Pseudomonadota</taxon>
        <taxon>Alphaproteobacteria</taxon>
        <taxon>Hyphomicrobiales</taxon>
        <taxon>Nitrobacteraceae</taxon>
        <taxon>Rhodopseudomonas</taxon>
    </lineage>
</organism>
<reference key="1">
    <citation type="submission" date="2008-05" db="EMBL/GenBank/DDBJ databases">
        <title>Complete sequence of Rhodopseudomonas palustris TIE-1.</title>
        <authorList>
            <consortium name="US DOE Joint Genome Institute"/>
            <person name="Lucas S."/>
            <person name="Copeland A."/>
            <person name="Lapidus A."/>
            <person name="Glavina del Rio T."/>
            <person name="Dalin E."/>
            <person name="Tice H."/>
            <person name="Pitluck S."/>
            <person name="Chain P."/>
            <person name="Malfatti S."/>
            <person name="Shin M."/>
            <person name="Vergez L."/>
            <person name="Lang D."/>
            <person name="Schmutz J."/>
            <person name="Larimer F."/>
            <person name="Land M."/>
            <person name="Hauser L."/>
            <person name="Kyrpides N."/>
            <person name="Mikhailova N."/>
            <person name="Emerson D."/>
            <person name="Newman D.K."/>
            <person name="Roden E."/>
            <person name="Richardson P."/>
        </authorList>
    </citation>
    <scope>NUCLEOTIDE SEQUENCE [LARGE SCALE GENOMIC DNA]</scope>
    <source>
        <strain>TIE-1</strain>
    </source>
</reference>
<evidence type="ECO:0000255" key="1">
    <source>
        <dbReference type="HAMAP-Rule" id="MF_00444"/>
    </source>
</evidence>
<comment type="function">
    <text evidence="1">Cleaves peptides in various proteins in a process that requires ATP hydrolysis. Has a chymotrypsin-like activity. Plays a major role in the degradation of misfolded proteins.</text>
</comment>
<comment type="catalytic activity">
    <reaction evidence="1">
        <text>Hydrolysis of proteins to small peptides in the presence of ATP and magnesium. alpha-casein is the usual test substrate. In the absence of ATP, only oligopeptides shorter than five residues are hydrolyzed (such as succinyl-Leu-Tyr-|-NHMec, and Leu-Tyr-Leu-|-Tyr-Trp, in which cleavage of the -Tyr-|-Leu- and -Tyr-|-Trp bonds also occurs).</text>
        <dbReference type="EC" id="3.4.21.92"/>
    </reaction>
</comment>
<comment type="subunit">
    <text evidence="1">Fourteen ClpP subunits assemble into 2 heptameric rings which stack back to back to give a disk-like structure with a central cavity, resembling the structure of eukaryotic proteasomes.</text>
</comment>
<comment type="subcellular location">
    <subcellularLocation>
        <location evidence="1">Cytoplasm</location>
    </subcellularLocation>
</comment>
<comment type="similarity">
    <text evidence="1">Belongs to the peptidase S14 family.</text>
</comment>
<sequence>MRDPVETYMNLVPMVVEQTNRGERAYDIFSRLLKERIIFVTGPVEDGMSTLIVAQLLFLEAENPKKEISMYINSPGGVVTSGLAIYDTMQFIRPPVSTLCTGQAASMGSLLLAAGHKDMRFSLPNARIMVHQPSGGFQGQATDIMLHAQEILNLKKRLNEIYVHHTGQTYKAIEDALERDKFLTAEMAREFGIVDKVIEKRPEDPAPAPKAA</sequence>
<proteinExistence type="inferred from homology"/>